<gene>
    <name type="primary">ysnA</name>
    <name type="ordered locus">BSU28360</name>
</gene>
<name>IXTPA_BACSU</name>
<comment type="function">
    <text evidence="1">Pyrophosphatase that catalyzes the hydrolysis of nucleoside triphosphates to their monophosphate derivatives, with a high preference for the non-canonical purine nucleotides XTP (xanthosine triphosphate), dITP (deoxyinosine triphosphate) and ITP. Seems to function as a house-cleaning enzyme that removes non-canonical purine nucleotides from the nucleotide pool, thus preventing their incorporation into DNA/RNA and avoiding chromosomal lesions.</text>
</comment>
<comment type="catalytic activity">
    <reaction evidence="1">
        <text>XTP + H2O = XMP + diphosphate + H(+)</text>
        <dbReference type="Rhea" id="RHEA:28610"/>
        <dbReference type="ChEBI" id="CHEBI:15377"/>
        <dbReference type="ChEBI" id="CHEBI:15378"/>
        <dbReference type="ChEBI" id="CHEBI:33019"/>
        <dbReference type="ChEBI" id="CHEBI:57464"/>
        <dbReference type="ChEBI" id="CHEBI:61314"/>
        <dbReference type="EC" id="3.6.1.66"/>
    </reaction>
</comment>
<comment type="catalytic activity">
    <reaction evidence="1">
        <text>dITP + H2O = dIMP + diphosphate + H(+)</text>
        <dbReference type="Rhea" id="RHEA:28342"/>
        <dbReference type="ChEBI" id="CHEBI:15377"/>
        <dbReference type="ChEBI" id="CHEBI:15378"/>
        <dbReference type="ChEBI" id="CHEBI:33019"/>
        <dbReference type="ChEBI" id="CHEBI:61194"/>
        <dbReference type="ChEBI" id="CHEBI:61382"/>
        <dbReference type="EC" id="3.6.1.66"/>
    </reaction>
</comment>
<comment type="catalytic activity">
    <reaction evidence="1">
        <text>ITP + H2O = IMP + diphosphate + H(+)</text>
        <dbReference type="Rhea" id="RHEA:29399"/>
        <dbReference type="ChEBI" id="CHEBI:15377"/>
        <dbReference type="ChEBI" id="CHEBI:15378"/>
        <dbReference type="ChEBI" id="CHEBI:33019"/>
        <dbReference type="ChEBI" id="CHEBI:58053"/>
        <dbReference type="ChEBI" id="CHEBI:61402"/>
        <dbReference type="EC" id="3.6.1.66"/>
    </reaction>
</comment>
<comment type="cofactor">
    <cofactor evidence="1">
        <name>Mg(2+)</name>
        <dbReference type="ChEBI" id="CHEBI:18420"/>
    </cofactor>
    <text evidence="1">Binds 1 Mg(2+) ion per subunit.</text>
</comment>
<comment type="subunit">
    <text evidence="1">Homodimer.</text>
</comment>
<comment type="similarity">
    <text evidence="1">Belongs to the HAM1 NTPase family.</text>
</comment>
<protein>
    <recommendedName>
        <fullName evidence="1">dITP/XTP pyrophosphatase</fullName>
        <ecNumber evidence="1">3.6.1.66</ecNumber>
    </recommendedName>
    <alternativeName>
        <fullName evidence="1">Non-canonical purine NTP pyrophosphatase</fullName>
    </alternativeName>
    <alternativeName>
        <fullName evidence="1">Non-standard purine NTP pyrophosphatase</fullName>
    </alternativeName>
    <alternativeName>
        <fullName evidence="1">Nucleoside-triphosphate diphosphatase</fullName>
    </alternativeName>
    <alternativeName>
        <fullName evidence="1">Nucleoside-triphosphate pyrophosphatase</fullName>
        <shortName evidence="1">NTPase</shortName>
    </alternativeName>
</protein>
<feature type="chain" id="PRO_0000178129" description="dITP/XTP pyrophosphatase">
    <location>
        <begin position="1"/>
        <end position="198"/>
    </location>
</feature>
<feature type="active site" description="Proton acceptor" evidence="1">
    <location>
        <position position="73"/>
    </location>
</feature>
<feature type="binding site" evidence="1">
    <location>
        <begin position="11"/>
        <end position="16"/>
    </location>
    <ligand>
        <name>substrate</name>
    </ligand>
</feature>
<feature type="binding site" evidence="1">
    <location>
        <position position="44"/>
    </location>
    <ligand>
        <name>Mg(2+)</name>
        <dbReference type="ChEBI" id="CHEBI:18420"/>
    </ligand>
</feature>
<feature type="binding site" evidence="1">
    <location>
        <position position="73"/>
    </location>
    <ligand>
        <name>Mg(2+)</name>
        <dbReference type="ChEBI" id="CHEBI:18420"/>
    </ligand>
</feature>
<feature type="binding site" evidence="1">
    <location>
        <position position="74"/>
    </location>
    <ligand>
        <name>substrate</name>
    </ligand>
</feature>
<feature type="binding site" evidence="1">
    <location>
        <begin position="156"/>
        <end position="159"/>
    </location>
    <ligand>
        <name>substrate</name>
    </ligand>
</feature>
<feature type="binding site" evidence="1">
    <location>
        <position position="179"/>
    </location>
    <ligand>
        <name>substrate</name>
    </ligand>
</feature>
<feature type="binding site" evidence="1">
    <location>
        <begin position="184"/>
        <end position="185"/>
    </location>
    <ligand>
        <name>substrate</name>
    </ligand>
</feature>
<keyword id="KW-0378">Hydrolase</keyword>
<keyword id="KW-0460">Magnesium</keyword>
<keyword id="KW-0479">Metal-binding</keyword>
<keyword id="KW-0546">Nucleotide metabolism</keyword>
<keyword id="KW-0547">Nucleotide-binding</keyword>
<keyword id="KW-1185">Reference proteome</keyword>
<evidence type="ECO:0000255" key="1">
    <source>
        <dbReference type="HAMAP-Rule" id="MF_01405"/>
    </source>
</evidence>
<sequence>MIIMKEAIIATHNPGKVKEFKEILEPRGYDVKSLAEIGFTEEIEETGHTFEENAIMKAEAVAKAVNKMVIADDSGLSIDNLGGRPGVYSARYAGEQKDDQANIEKVLSELKGIEKEQRTARFRCALAVSIPGEETKTVEGHVEGYIAEEPRGEYGFGYDPIFIVKDKDKTMAELTSDEKNKISHRADALKKLSKLLEA</sequence>
<organism>
    <name type="scientific">Bacillus subtilis (strain 168)</name>
    <dbReference type="NCBI Taxonomy" id="224308"/>
    <lineage>
        <taxon>Bacteria</taxon>
        <taxon>Bacillati</taxon>
        <taxon>Bacillota</taxon>
        <taxon>Bacilli</taxon>
        <taxon>Bacillales</taxon>
        <taxon>Bacillaceae</taxon>
        <taxon>Bacillus</taxon>
    </lineage>
</organism>
<dbReference type="EC" id="3.6.1.66" evidence="1"/>
<dbReference type="EMBL" id="Z75208">
    <property type="protein sequence ID" value="CAA99555.1"/>
    <property type="molecule type" value="Genomic_DNA"/>
</dbReference>
<dbReference type="EMBL" id="AL009126">
    <property type="protein sequence ID" value="CAB14796.1"/>
    <property type="molecule type" value="Genomic_DNA"/>
</dbReference>
<dbReference type="PIR" id="C69986">
    <property type="entry name" value="C69986"/>
</dbReference>
<dbReference type="RefSeq" id="WP_010886588.1">
    <property type="nucleotide sequence ID" value="NZ_OZ025638.1"/>
</dbReference>
<dbReference type="SMR" id="P94558"/>
<dbReference type="FunCoup" id="P94558">
    <property type="interactions" value="610"/>
</dbReference>
<dbReference type="STRING" id="224308.BSU28360"/>
<dbReference type="jPOST" id="P94558"/>
<dbReference type="PaxDb" id="224308-BSU28360"/>
<dbReference type="EnsemblBacteria" id="CAB14796">
    <property type="protein sequence ID" value="CAB14796"/>
    <property type="gene ID" value="BSU_28360"/>
</dbReference>
<dbReference type="GeneID" id="937465"/>
<dbReference type="KEGG" id="bsu:BSU28360"/>
<dbReference type="PATRIC" id="fig|224308.43.peg.2966"/>
<dbReference type="eggNOG" id="COG0127">
    <property type="taxonomic scope" value="Bacteria"/>
</dbReference>
<dbReference type="InParanoid" id="P94558"/>
<dbReference type="OrthoDB" id="9807456at2"/>
<dbReference type="PhylomeDB" id="P94558"/>
<dbReference type="BioCyc" id="BSUB:BSU28360-MONOMER"/>
<dbReference type="Proteomes" id="UP000001570">
    <property type="component" value="Chromosome"/>
</dbReference>
<dbReference type="GO" id="GO:0005737">
    <property type="term" value="C:cytoplasm"/>
    <property type="evidence" value="ECO:0000318"/>
    <property type="project" value="GO_Central"/>
</dbReference>
<dbReference type="GO" id="GO:0005829">
    <property type="term" value="C:cytosol"/>
    <property type="evidence" value="ECO:0000318"/>
    <property type="project" value="GO_Central"/>
</dbReference>
<dbReference type="GO" id="GO:0035870">
    <property type="term" value="F:dITP diphosphatase activity"/>
    <property type="evidence" value="ECO:0007669"/>
    <property type="project" value="RHEA"/>
</dbReference>
<dbReference type="GO" id="GO:0036220">
    <property type="term" value="F:ITP diphosphatase activity"/>
    <property type="evidence" value="ECO:0007669"/>
    <property type="project" value="UniProtKB-EC"/>
</dbReference>
<dbReference type="GO" id="GO:0046872">
    <property type="term" value="F:metal ion binding"/>
    <property type="evidence" value="ECO:0007669"/>
    <property type="project" value="UniProtKB-KW"/>
</dbReference>
<dbReference type="GO" id="GO:0047429">
    <property type="term" value="F:nucleoside triphosphate diphosphatase activity"/>
    <property type="evidence" value="ECO:0000318"/>
    <property type="project" value="GO_Central"/>
</dbReference>
<dbReference type="GO" id="GO:0000166">
    <property type="term" value="F:nucleotide binding"/>
    <property type="evidence" value="ECO:0007669"/>
    <property type="project" value="UniProtKB-KW"/>
</dbReference>
<dbReference type="GO" id="GO:0017111">
    <property type="term" value="F:ribonucleoside triphosphate phosphatase activity"/>
    <property type="evidence" value="ECO:0007669"/>
    <property type="project" value="InterPro"/>
</dbReference>
<dbReference type="GO" id="GO:0036222">
    <property type="term" value="F:XTP diphosphatase activity"/>
    <property type="evidence" value="ECO:0007669"/>
    <property type="project" value="RHEA"/>
</dbReference>
<dbReference type="GO" id="GO:0009143">
    <property type="term" value="P:nucleoside triphosphate catabolic process"/>
    <property type="evidence" value="ECO:0000318"/>
    <property type="project" value="GO_Central"/>
</dbReference>
<dbReference type="GO" id="GO:0009117">
    <property type="term" value="P:nucleotide metabolic process"/>
    <property type="evidence" value="ECO:0007669"/>
    <property type="project" value="UniProtKB-KW"/>
</dbReference>
<dbReference type="GO" id="GO:0009146">
    <property type="term" value="P:purine nucleoside triphosphate catabolic process"/>
    <property type="evidence" value="ECO:0007669"/>
    <property type="project" value="UniProtKB-UniRule"/>
</dbReference>
<dbReference type="CDD" id="cd00515">
    <property type="entry name" value="HAM1"/>
    <property type="match status" value="1"/>
</dbReference>
<dbReference type="FunFam" id="3.90.950.10:FF:000001">
    <property type="entry name" value="dITP/XTP pyrophosphatase"/>
    <property type="match status" value="1"/>
</dbReference>
<dbReference type="Gene3D" id="3.90.950.10">
    <property type="match status" value="1"/>
</dbReference>
<dbReference type="HAMAP" id="MF_01405">
    <property type="entry name" value="Non_canon_purine_NTPase"/>
    <property type="match status" value="1"/>
</dbReference>
<dbReference type="InterPro" id="IPR020922">
    <property type="entry name" value="dITP/XTP_pyrophosphatase"/>
</dbReference>
<dbReference type="InterPro" id="IPR029001">
    <property type="entry name" value="ITPase-like_fam"/>
</dbReference>
<dbReference type="InterPro" id="IPR002637">
    <property type="entry name" value="RdgB/HAM1"/>
</dbReference>
<dbReference type="NCBIfam" id="NF011397">
    <property type="entry name" value="PRK14822.1"/>
    <property type="match status" value="1"/>
</dbReference>
<dbReference type="NCBIfam" id="TIGR00042">
    <property type="entry name" value="RdgB/HAM1 family non-canonical purine NTP pyrophosphatase"/>
    <property type="match status" value="1"/>
</dbReference>
<dbReference type="PANTHER" id="PTHR11067:SF9">
    <property type="entry name" value="INOSINE TRIPHOSPHATE PYROPHOSPHATASE"/>
    <property type="match status" value="1"/>
</dbReference>
<dbReference type="PANTHER" id="PTHR11067">
    <property type="entry name" value="INOSINE TRIPHOSPHATE PYROPHOSPHATASE/HAM1 PROTEIN"/>
    <property type="match status" value="1"/>
</dbReference>
<dbReference type="Pfam" id="PF01725">
    <property type="entry name" value="Ham1p_like"/>
    <property type="match status" value="1"/>
</dbReference>
<dbReference type="SUPFAM" id="SSF52972">
    <property type="entry name" value="ITPase-like"/>
    <property type="match status" value="1"/>
</dbReference>
<reference key="1">
    <citation type="journal article" date="1996" name="Microbiology">
        <title>The dnaB-pheA (256 degrees-240 degrees) region of the Bacillus subtilis chromosome containing genes responsible for stress responses, the utilization of plant cell walls and primary metabolism.</title>
        <authorList>
            <person name="Wipat A."/>
            <person name="Carter N."/>
            <person name="Brignell C.S."/>
            <person name="Guy J.B."/>
            <person name="Piper K."/>
            <person name="Sanders J."/>
            <person name="Emmerson P.T."/>
            <person name="Harwood C.R."/>
        </authorList>
    </citation>
    <scope>NUCLEOTIDE SEQUENCE [GENOMIC DNA]</scope>
    <source>
        <strain>168</strain>
    </source>
</reference>
<reference key="2">
    <citation type="journal article" date="1997" name="Nature">
        <title>The complete genome sequence of the Gram-positive bacterium Bacillus subtilis.</title>
        <authorList>
            <person name="Kunst F."/>
            <person name="Ogasawara N."/>
            <person name="Moszer I."/>
            <person name="Albertini A.M."/>
            <person name="Alloni G."/>
            <person name="Azevedo V."/>
            <person name="Bertero M.G."/>
            <person name="Bessieres P."/>
            <person name="Bolotin A."/>
            <person name="Borchert S."/>
            <person name="Borriss R."/>
            <person name="Boursier L."/>
            <person name="Brans A."/>
            <person name="Braun M."/>
            <person name="Brignell S.C."/>
            <person name="Bron S."/>
            <person name="Brouillet S."/>
            <person name="Bruschi C.V."/>
            <person name="Caldwell B."/>
            <person name="Capuano V."/>
            <person name="Carter N.M."/>
            <person name="Choi S.-K."/>
            <person name="Codani J.-J."/>
            <person name="Connerton I.F."/>
            <person name="Cummings N.J."/>
            <person name="Daniel R.A."/>
            <person name="Denizot F."/>
            <person name="Devine K.M."/>
            <person name="Duesterhoeft A."/>
            <person name="Ehrlich S.D."/>
            <person name="Emmerson P.T."/>
            <person name="Entian K.-D."/>
            <person name="Errington J."/>
            <person name="Fabret C."/>
            <person name="Ferrari E."/>
            <person name="Foulger D."/>
            <person name="Fritz C."/>
            <person name="Fujita M."/>
            <person name="Fujita Y."/>
            <person name="Fuma S."/>
            <person name="Galizzi A."/>
            <person name="Galleron N."/>
            <person name="Ghim S.-Y."/>
            <person name="Glaser P."/>
            <person name="Goffeau A."/>
            <person name="Golightly E.J."/>
            <person name="Grandi G."/>
            <person name="Guiseppi G."/>
            <person name="Guy B.J."/>
            <person name="Haga K."/>
            <person name="Haiech J."/>
            <person name="Harwood C.R."/>
            <person name="Henaut A."/>
            <person name="Hilbert H."/>
            <person name="Holsappel S."/>
            <person name="Hosono S."/>
            <person name="Hullo M.-F."/>
            <person name="Itaya M."/>
            <person name="Jones L.-M."/>
            <person name="Joris B."/>
            <person name="Karamata D."/>
            <person name="Kasahara Y."/>
            <person name="Klaerr-Blanchard M."/>
            <person name="Klein C."/>
            <person name="Kobayashi Y."/>
            <person name="Koetter P."/>
            <person name="Koningstein G."/>
            <person name="Krogh S."/>
            <person name="Kumano M."/>
            <person name="Kurita K."/>
            <person name="Lapidus A."/>
            <person name="Lardinois S."/>
            <person name="Lauber J."/>
            <person name="Lazarevic V."/>
            <person name="Lee S.-M."/>
            <person name="Levine A."/>
            <person name="Liu H."/>
            <person name="Masuda S."/>
            <person name="Mauel C."/>
            <person name="Medigue C."/>
            <person name="Medina N."/>
            <person name="Mellado R.P."/>
            <person name="Mizuno M."/>
            <person name="Moestl D."/>
            <person name="Nakai S."/>
            <person name="Noback M."/>
            <person name="Noone D."/>
            <person name="O'Reilly M."/>
            <person name="Ogawa K."/>
            <person name="Ogiwara A."/>
            <person name="Oudega B."/>
            <person name="Park S.-H."/>
            <person name="Parro V."/>
            <person name="Pohl T.M."/>
            <person name="Portetelle D."/>
            <person name="Porwollik S."/>
            <person name="Prescott A.M."/>
            <person name="Presecan E."/>
            <person name="Pujic P."/>
            <person name="Purnelle B."/>
            <person name="Rapoport G."/>
            <person name="Rey M."/>
            <person name="Reynolds S."/>
            <person name="Rieger M."/>
            <person name="Rivolta C."/>
            <person name="Rocha E."/>
            <person name="Roche B."/>
            <person name="Rose M."/>
            <person name="Sadaie Y."/>
            <person name="Sato T."/>
            <person name="Scanlan E."/>
            <person name="Schleich S."/>
            <person name="Schroeter R."/>
            <person name="Scoffone F."/>
            <person name="Sekiguchi J."/>
            <person name="Sekowska A."/>
            <person name="Seror S.J."/>
            <person name="Serror P."/>
            <person name="Shin B.-S."/>
            <person name="Soldo B."/>
            <person name="Sorokin A."/>
            <person name="Tacconi E."/>
            <person name="Takagi T."/>
            <person name="Takahashi H."/>
            <person name="Takemaru K."/>
            <person name="Takeuchi M."/>
            <person name="Tamakoshi A."/>
            <person name="Tanaka T."/>
            <person name="Terpstra P."/>
            <person name="Tognoni A."/>
            <person name="Tosato V."/>
            <person name="Uchiyama S."/>
            <person name="Vandenbol M."/>
            <person name="Vannier F."/>
            <person name="Vassarotti A."/>
            <person name="Viari A."/>
            <person name="Wambutt R."/>
            <person name="Wedler E."/>
            <person name="Wedler H."/>
            <person name="Weitzenegger T."/>
            <person name="Winters P."/>
            <person name="Wipat A."/>
            <person name="Yamamoto H."/>
            <person name="Yamane K."/>
            <person name="Yasumoto K."/>
            <person name="Yata K."/>
            <person name="Yoshida K."/>
            <person name="Yoshikawa H.-F."/>
            <person name="Zumstein E."/>
            <person name="Yoshikawa H."/>
            <person name="Danchin A."/>
        </authorList>
    </citation>
    <scope>NUCLEOTIDE SEQUENCE [LARGE SCALE GENOMIC DNA]</scope>
    <source>
        <strain>168</strain>
    </source>
</reference>
<reference key="3">
    <citation type="journal article" date="1992" name="J. Bacteriol.">
        <title>Identification of the rph (RNase PH) gene of Bacillus subtilis: evidence for suppression of cold-sensitive mutations in Escherichia coli.</title>
        <authorList>
            <person name="Craven M.G."/>
            <person name="Henner D.J."/>
            <person name="Alessi D."/>
            <person name="Schauer A.T."/>
            <person name="Ost K.A."/>
            <person name="Deutscher M.P."/>
            <person name="Friedman D.I."/>
        </authorList>
    </citation>
    <scope>NUCLEOTIDE SEQUENCE [GENOMIC DNA] OF 1-20</scope>
</reference>
<proteinExistence type="inferred from homology"/>
<accession>P94558</accession>